<dbReference type="EC" id="5.1.3.20" evidence="1"/>
<dbReference type="EMBL" id="CP001091">
    <property type="protein sequence ID" value="ACE62422.1"/>
    <property type="molecule type" value="Genomic_DNA"/>
</dbReference>
<dbReference type="RefSeq" id="WP_005618185.1">
    <property type="nucleotide sequence ID" value="NC_010939.1"/>
</dbReference>
<dbReference type="SMR" id="B3GYT6"/>
<dbReference type="KEGG" id="apa:APP7_1770"/>
<dbReference type="HOGENOM" id="CLU_007383_1_3_6"/>
<dbReference type="UniPathway" id="UPA00356">
    <property type="reaction ID" value="UER00440"/>
</dbReference>
<dbReference type="Proteomes" id="UP000001226">
    <property type="component" value="Chromosome"/>
</dbReference>
<dbReference type="GO" id="GO:0008712">
    <property type="term" value="F:ADP-glyceromanno-heptose 6-epimerase activity"/>
    <property type="evidence" value="ECO:0007669"/>
    <property type="project" value="UniProtKB-UniRule"/>
</dbReference>
<dbReference type="GO" id="GO:0050661">
    <property type="term" value="F:NADP binding"/>
    <property type="evidence" value="ECO:0007669"/>
    <property type="project" value="InterPro"/>
</dbReference>
<dbReference type="GO" id="GO:0097171">
    <property type="term" value="P:ADP-L-glycero-beta-D-manno-heptose biosynthetic process"/>
    <property type="evidence" value="ECO:0007669"/>
    <property type="project" value="UniProtKB-UniPathway"/>
</dbReference>
<dbReference type="GO" id="GO:0005975">
    <property type="term" value="P:carbohydrate metabolic process"/>
    <property type="evidence" value="ECO:0007669"/>
    <property type="project" value="UniProtKB-UniRule"/>
</dbReference>
<dbReference type="CDD" id="cd05248">
    <property type="entry name" value="ADP_GME_SDR_e"/>
    <property type="match status" value="1"/>
</dbReference>
<dbReference type="Gene3D" id="3.40.50.720">
    <property type="entry name" value="NAD(P)-binding Rossmann-like Domain"/>
    <property type="match status" value="1"/>
</dbReference>
<dbReference type="Gene3D" id="3.90.25.10">
    <property type="entry name" value="UDP-galactose 4-epimerase, domain 1"/>
    <property type="match status" value="1"/>
</dbReference>
<dbReference type="HAMAP" id="MF_01601">
    <property type="entry name" value="Heptose_epimerase"/>
    <property type="match status" value="1"/>
</dbReference>
<dbReference type="InterPro" id="IPR001509">
    <property type="entry name" value="Epimerase_deHydtase"/>
</dbReference>
<dbReference type="InterPro" id="IPR011912">
    <property type="entry name" value="Heptose_epim"/>
</dbReference>
<dbReference type="InterPro" id="IPR036291">
    <property type="entry name" value="NAD(P)-bd_dom_sf"/>
</dbReference>
<dbReference type="NCBIfam" id="TIGR02197">
    <property type="entry name" value="heptose_epim"/>
    <property type="match status" value="1"/>
</dbReference>
<dbReference type="NCBIfam" id="NF008360">
    <property type="entry name" value="PRK11150.1"/>
    <property type="match status" value="1"/>
</dbReference>
<dbReference type="PANTHER" id="PTHR43103:SF3">
    <property type="entry name" value="ADP-L-GLYCERO-D-MANNO-HEPTOSE-6-EPIMERASE"/>
    <property type="match status" value="1"/>
</dbReference>
<dbReference type="PANTHER" id="PTHR43103">
    <property type="entry name" value="NUCLEOSIDE-DIPHOSPHATE-SUGAR EPIMERASE"/>
    <property type="match status" value="1"/>
</dbReference>
<dbReference type="Pfam" id="PF01370">
    <property type="entry name" value="Epimerase"/>
    <property type="match status" value="1"/>
</dbReference>
<dbReference type="SUPFAM" id="SSF51735">
    <property type="entry name" value="NAD(P)-binding Rossmann-fold domains"/>
    <property type="match status" value="1"/>
</dbReference>
<gene>
    <name evidence="1" type="primary">hldD</name>
    <name type="ordered locus">APP7_1770</name>
</gene>
<feature type="chain" id="PRO_1000148063" description="ADP-L-glycero-D-manno-heptose-6-epimerase">
    <location>
        <begin position="1"/>
        <end position="308"/>
    </location>
</feature>
<feature type="active site" description="Proton acceptor" evidence="1">
    <location>
        <position position="140"/>
    </location>
</feature>
<feature type="active site" description="Proton acceptor" evidence="1">
    <location>
        <position position="178"/>
    </location>
</feature>
<feature type="binding site" evidence="1">
    <location>
        <begin position="10"/>
        <end position="11"/>
    </location>
    <ligand>
        <name>NADP(+)</name>
        <dbReference type="ChEBI" id="CHEBI:58349"/>
    </ligand>
</feature>
<feature type="binding site" evidence="1">
    <location>
        <begin position="31"/>
        <end position="32"/>
    </location>
    <ligand>
        <name>NADP(+)</name>
        <dbReference type="ChEBI" id="CHEBI:58349"/>
    </ligand>
</feature>
<feature type="binding site" evidence="1">
    <location>
        <position position="38"/>
    </location>
    <ligand>
        <name>NADP(+)</name>
        <dbReference type="ChEBI" id="CHEBI:58349"/>
    </ligand>
</feature>
<feature type="binding site" evidence="1">
    <location>
        <position position="53"/>
    </location>
    <ligand>
        <name>NADP(+)</name>
        <dbReference type="ChEBI" id="CHEBI:58349"/>
    </ligand>
</feature>
<feature type="binding site" evidence="1">
    <location>
        <begin position="75"/>
        <end position="79"/>
    </location>
    <ligand>
        <name>NADP(+)</name>
        <dbReference type="ChEBI" id="CHEBI:58349"/>
    </ligand>
</feature>
<feature type="binding site" evidence="1">
    <location>
        <position position="92"/>
    </location>
    <ligand>
        <name>NADP(+)</name>
        <dbReference type="ChEBI" id="CHEBI:58349"/>
    </ligand>
</feature>
<feature type="binding site" evidence="1">
    <location>
        <position position="144"/>
    </location>
    <ligand>
        <name>NADP(+)</name>
        <dbReference type="ChEBI" id="CHEBI:58349"/>
    </ligand>
</feature>
<feature type="binding site" evidence="1">
    <location>
        <position position="169"/>
    </location>
    <ligand>
        <name>substrate</name>
    </ligand>
</feature>
<feature type="binding site" evidence="1">
    <location>
        <position position="170"/>
    </location>
    <ligand>
        <name>NADP(+)</name>
        <dbReference type="ChEBI" id="CHEBI:58349"/>
    </ligand>
</feature>
<feature type="binding site" evidence="1">
    <location>
        <position position="178"/>
    </location>
    <ligand>
        <name>NADP(+)</name>
        <dbReference type="ChEBI" id="CHEBI:58349"/>
    </ligand>
</feature>
<feature type="binding site" evidence="1">
    <location>
        <position position="180"/>
    </location>
    <ligand>
        <name>substrate</name>
    </ligand>
</feature>
<feature type="binding site" evidence="1">
    <location>
        <position position="187"/>
    </location>
    <ligand>
        <name>substrate</name>
    </ligand>
</feature>
<feature type="binding site" evidence="1">
    <location>
        <begin position="201"/>
        <end position="204"/>
    </location>
    <ligand>
        <name>substrate</name>
    </ligand>
</feature>
<feature type="binding site" evidence="1">
    <location>
        <position position="209"/>
    </location>
    <ligand>
        <name>substrate</name>
    </ligand>
</feature>
<feature type="binding site" evidence="1">
    <location>
        <position position="272"/>
    </location>
    <ligand>
        <name>substrate</name>
    </ligand>
</feature>
<keyword id="KW-0119">Carbohydrate metabolism</keyword>
<keyword id="KW-0413">Isomerase</keyword>
<keyword id="KW-0521">NADP</keyword>
<reference key="1">
    <citation type="submission" date="2008-06" db="EMBL/GenBank/DDBJ databases">
        <title>Genome and proteome analysis of A. pleuropneumoniae serotype 7.</title>
        <authorList>
            <person name="Linke B."/>
            <person name="Buettner F."/>
            <person name="Martinez-Arias R."/>
            <person name="Goesmann A."/>
            <person name="Baltes N."/>
            <person name="Tegetmeyer H."/>
            <person name="Singh M."/>
            <person name="Gerlach G.F."/>
        </authorList>
    </citation>
    <scope>NUCLEOTIDE SEQUENCE [LARGE SCALE GENOMIC DNA]</scope>
    <source>
        <strain>AP76</strain>
    </source>
</reference>
<sequence>MIIVTGGFGMIGSNIVKALNEIGRKDILVVDNLKNGEKFVNLVDLDIADYCDKEDFIASIIAGDDFGEIDAVFHEGACSATTEWDGKYLMHNNYEYSKELLHFCLDHQIPFFYASSAATYGGRSDNFIEERKFEQPLNAYGYSKFLFDEYVRQVLPEADSPVCGFKYFNVYGPREQHKGSMASVAFHLNNQMLKGENPKLFEGSETFLRDFVYVEDVAKVNIWAWQNSISGIYNLGTGKAESFQAVAQAVIDFHGKGEIEKIPFPDHLKSRYQTFTQADLTKLRAAGYTGTFKTVAEGTKEYMAWLNR</sequence>
<accession>B3GYT6</accession>
<organism>
    <name type="scientific">Actinobacillus pleuropneumoniae serotype 7 (strain AP76)</name>
    <dbReference type="NCBI Taxonomy" id="537457"/>
    <lineage>
        <taxon>Bacteria</taxon>
        <taxon>Pseudomonadati</taxon>
        <taxon>Pseudomonadota</taxon>
        <taxon>Gammaproteobacteria</taxon>
        <taxon>Pasteurellales</taxon>
        <taxon>Pasteurellaceae</taxon>
        <taxon>Actinobacillus</taxon>
    </lineage>
</organism>
<protein>
    <recommendedName>
        <fullName evidence="1">ADP-L-glycero-D-manno-heptose-6-epimerase</fullName>
        <ecNumber evidence="1">5.1.3.20</ecNumber>
    </recommendedName>
    <alternativeName>
        <fullName evidence="1">ADP-L-glycero-beta-D-manno-heptose-6-epimerase</fullName>
        <shortName evidence="1">ADP-glyceromanno-heptose 6-epimerase</shortName>
        <shortName evidence="1">ADP-hep 6-epimerase</shortName>
        <shortName evidence="1">AGME</shortName>
    </alternativeName>
</protein>
<evidence type="ECO:0000255" key="1">
    <source>
        <dbReference type="HAMAP-Rule" id="MF_01601"/>
    </source>
</evidence>
<name>HLDD_ACTP7</name>
<comment type="function">
    <text evidence="1">Catalyzes the interconversion between ADP-D-glycero-beta-D-manno-heptose and ADP-L-glycero-beta-D-manno-heptose via an epimerization at carbon 6 of the heptose.</text>
</comment>
<comment type="catalytic activity">
    <reaction evidence="1">
        <text>ADP-D-glycero-beta-D-manno-heptose = ADP-L-glycero-beta-D-manno-heptose</text>
        <dbReference type="Rhea" id="RHEA:17577"/>
        <dbReference type="ChEBI" id="CHEBI:59967"/>
        <dbReference type="ChEBI" id="CHEBI:61506"/>
        <dbReference type="EC" id="5.1.3.20"/>
    </reaction>
</comment>
<comment type="cofactor">
    <cofactor evidence="1">
        <name>NADP(+)</name>
        <dbReference type="ChEBI" id="CHEBI:58349"/>
    </cofactor>
    <text evidence="1">Binds 1 NADP(+) per subunit.</text>
</comment>
<comment type="pathway">
    <text evidence="1">Nucleotide-sugar biosynthesis; ADP-L-glycero-beta-D-manno-heptose biosynthesis; ADP-L-glycero-beta-D-manno-heptose from D-glycero-beta-D-manno-heptose 7-phosphate: step 4/4.</text>
</comment>
<comment type="subunit">
    <text evidence="1">Homopentamer.</text>
</comment>
<comment type="domain">
    <text evidence="1">Contains a large N-terminal NADP-binding domain, and a smaller C-terminal substrate-binding domain.</text>
</comment>
<comment type="similarity">
    <text evidence="1">Belongs to the NAD(P)-dependent epimerase/dehydratase family. HldD subfamily.</text>
</comment>
<proteinExistence type="inferred from homology"/>